<protein>
    <recommendedName>
        <fullName>Neutral ceramidase</fullName>
        <shortName>N-CDase</shortName>
        <shortName>NCDase</shortName>
        <ecNumber>3.5.1.23</ecNumber>
    </recommendedName>
    <alternativeName>
        <fullName>Acylsphingosine deacylase</fullName>
    </alternativeName>
    <alternativeName>
        <fullName>N-acylsphingosine amidohydrolase</fullName>
    </alternativeName>
</protein>
<sequence>MAISKIAFLALIALSGLCGLASATYKVGVGRADITGPPVEINFMGYANIKQVGRGIHTRVFARAFVVEDEKGNRVAFVSADAGMMGYGLKREVIKRLQARYGNLYHTDNVAISGTHTHGAPGGFLMHLLYDISILGFVPQTFEVMAQGLYLCIKRATDNLVDGRIFLSKTTVLNVNINRSPTSYLRNPEEERAQYEHDTDKTLTQLRFVDLENNLLGAFNWYAVHATSMNNTNRLVTSDNVGYAALLLEKEYNPNKMPGKGKFVGAFCSSNLGDVSPNIMGPKCSISGNECDLLTSRCPAGEGECFASGPGRDMVESTQILGQRLADAALGLLNEQSQESTAREVTGDVRFIHQFVDMPNYNGSAYNPLSRKIDKIRGCQPAMGYSFAAGTTDGPGAFSFEQGTTTDNPMWNFVRDFIATPTQEDIKCHEPKPILLATGRATFPYEWQPKIVSDQLLKIGDVIIAAVPCEFTTMAGRRLRNQIRAAASAAGGLDTEVIIAGLTNIYTSYTVTPEEYQAQRYEAASTIFGPHTHSIYMDVFERLTKALMRNETVEPGPSPPYMNDVMLSLNTGVLFDGHPINTDFGYVKTQPEKEYGINDTVKVTYISGNPRNNLFTEKTYFTVERKINEDRWKVAYTDASWETKMIWHRTNTILGFSDLEIYWNISPQTLPGVYRIRHSGEYKYILGGKYPYEGLSHSFTVKED</sequence>
<evidence type="ECO:0000250" key="1"/>
<evidence type="ECO:0000255" key="2"/>
<evidence type="ECO:0000305" key="3"/>
<accession>Q29C43</accession>
<comment type="function">
    <text evidence="1">Hydrolyzes the sphingolipid ceramide into sphingosine and free fatty acid at an optimal pH of 6.5-7.5. Acts as a key regulator of sphingolipid signaling metabolites by generating sphingosine at the cell surface (By similarity).</text>
</comment>
<comment type="catalytic activity">
    <reaction>
        <text>an N-acylsphing-4-enine + H2O = sphing-4-enine + a fatty acid</text>
        <dbReference type="Rhea" id="RHEA:20856"/>
        <dbReference type="ChEBI" id="CHEBI:15377"/>
        <dbReference type="ChEBI" id="CHEBI:28868"/>
        <dbReference type="ChEBI" id="CHEBI:52639"/>
        <dbReference type="ChEBI" id="CHEBI:57756"/>
        <dbReference type="EC" id="3.5.1.23"/>
    </reaction>
</comment>
<comment type="subcellular location">
    <subcellularLocation>
        <location evidence="1">Secreted</location>
    </subcellularLocation>
</comment>
<comment type="PTM">
    <text evidence="1">N-glycosylated.</text>
</comment>
<comment type="similarity">
    <text evidence="3">Belongs to the neutral ceramidase family.</text>
</comment>
<dbReference type="EC" id="3.5.1.23"/>
<dbReference type="EMBL" id="CM000070">
    <property type="protein sequence ID" value="EAL26803.1"/>
    <property type="molecule type" value="Genomic_DNA"/>
</dbReference>
<dbReference type="RefSeq" id="XP_015038524.1">
    <property type="nucleotide sequence ID" value="XM_015183038.1"/>
</dbReference>
<dbReference type="SMR" id="Q29C43"/>
<dbReference type="FunCoup" id="Q29C43">
    <property type="interactions" value="200"/>
</dbReference>
<dbReference type="STRING" id="46245.Q29C43"/>
<dbReference type="GlyCosmos" id="Q29C43">
    <property type="glycosylation" value="4 sites, No reported glycans"/>
</dbReference>
<dbReference type="EnsemblMetazoa" id="FBtr0368768">
    <property type="protein sequence ID" value="FBpp0331472"/>
    <property type="gene ID" value="FBgn0073228"/>
</dbReference>
<dbReference type="GeneID" id="4800384"/>
<dbReference type="KEGG" id="dpo:4800384"/>
<dbReference type="CTD" id="43618"/>
<dbReference type="eggNOG" id="KOG2232">
    <property type="taxonomic scope" value="Eukaryota"/>
</dbReference>
<dbReference type="HOGENOM" id="CLU_011300_2_0_1"/>
<dbReference type="InParanoid" id="Q29C43"/>
<dbReference type="OMA" id="GTTVQTC"/>
<dbReference type="PhylomeDB" id="Q29C43"/>
<dbReference type="Proteomes" id="UP000001819">
    <property type="component" value="Chromosome 2"/>
</dbReference>
<dbReference type="Bgee" id="FBgn0073228">
    <property type="expression patterns" value="Expressed in insect adult head and 2 other cell types or tissues"/>
</dbReference>
<dbReference type="ExpressionAtlas" id="Q29C43">
    <property type="expression patterns" value="baseline"/>
</dbReference>
<dbReference type="GO" id="GO:0005576">
    <property type="term" value="C:extracellular region"/>
    <property type="evidence" value="ECO:0007669"/>
    <property type="project" value="UniProtKB-SubCell"/>
</dbReference>
<dbReference type="GO" id="GO:0016020">
    <property type="term" value="C:membrane"/>
    <property type="evidence" value="ECO:0007669"/>
    <property type="project" value="GOC"/>
</dbReference>
<dbReference type="GO" id="GO:0017040">
    <property type="term" value="F:N-acylsphingosine amidohydrolase activity"/>
    <property type="evidence" value="ECO:0007669"/>
    <property type="project" value="UniProtKB-EC"/>
</dbReference>
<dbReference type="GO" id="GO:0046514">
    <property type="term" value="P:ceramide catabolic process"/>
    <property type="evidence" value="ECO:0007669"/>
    <property type="project" value="InterPro"/>
</dbReference>
<dbReference type="GO" id="GO:0042759">
    <property type="term" value="P:long-chain fatty acid biosynthetic process"/>
    <property type="evidence" value="ECO:0007669"/>
    <property type="project" value="TreeGrafter"/>
</dbReference>
<dbReference type="GO" id="GO:0046512">
    <property type="term" value="P:sphingosine biosynthetic process"/>
    <property type="evidence" value="ECO:0007669"/>
    <property type="project" value="TreeGrafter"/>
</dbReference>
<dbReference type="FunFam" id="2.60.40.2300:FF:000003">
    <property type="entry name" value="Neutral ceramidase"/>
    <property type="match status" value="1"/>
</dbReference>
<dbReference type="Gene3D" id="2.60.40.2300">
    <property type="entry name" value="Neutral/alkaline non-lysosomal ceramidase, C-terminal domain"/>
    <property type="match status" value="1"/>
</dbReference>
<dbReference type="InterPro" id="IPR006823">
    <property type="entry name" value="Ceramidase_alk"/>
</dbReference>
<dbReference type="InterPro" id="IPR038445">
    <property type="entry name" value="NCDase_C_sf"/>
</dbReference>
<dbReference type="InterPro" id="IPR031331">
    <property type="entry name" value="NEUT/ALK_ceramidase_C"/>
</dbReference>
<dbReference type="InterPro" id="IPR031329">
    <property type="entry name" value="NEUT/ALK_ceramidase_N"/>
</dbReference>
<dbReference type="PANTHER" id="PTHR12670">
    <property type="entry name" value="CERAMIDASE"/>
    <property type="match status" value="1"/>
</dbReference>
<dbReference type="PANTHER" id="PTHR12670:SF1">
    <property type="entry name" value="NEUTRAL CERAMIDASE"/>
    <property type="match status" value="1"/>
</dbReference>
<dbReference type="Pfam" id="PF04734">
    <property type="entry name" value="Ceramidase_alk"/>
    <property type="match status" value="1"/>
</dbReference>
<dbReference type="Pfam" id="PF17048">
    <property type="entry name" value="Ceramidse_alk_C"/>
    <property type="match status" value="1"/>
</dbReference>
<name>NCASE_DROPS</name>
<feature type="signal peptide" evidence="2">
    <location>
        <begin position="1"/>
        <end position="23"/>
    </location>
</feature>
<feature type="chain" id="PRO_0000247107" description="Neutral ceramidase">
    <location>
        <begin position="24"/>
        <end position="704"/>
    </location>
</feature>
<feature type="active site" description="Nucleophile" evidence="1">
    <location>
        <position position="276"/>
    </location>
</feature>
<feature type="glycosylation site" description="N-linked (GlcNAc...) asparagine" evidence="2">
    <location>
        <position position="230"/>
    </location>
</feature>
<feature type="glycosylation site" description="N-linked (GlcNAc...) asparagine" evidence="2">
    <location>
        <position position="362"/>
    </location>
</feature>
<feature type="glycosylation site" description="N-linked (GlcNAc...) asparagine" evidence="2">
    <location>
        <position position="550"/>
    </location>
</feature>
<feature type="glycosylation site" description="N-linked (GlcNAc...) asparagine" evidence="2">
    <location>
        <position position="598"/>
    </location>
</feature>
<organism>
    <name type="scientific">Drosophila pseudoobscura pseudoobscura</name>
    <name type="common">Fruit fly</name>
    <dbReference type="NCBI Taxonomy" id="46245"/>
    <lineage>
        <taxon>Eukaryota</taxon>
        <taxon>Metazoa</taxon>
        <taxon>Ecdysozoa</taxon>
        <taxon>Arthropoda</taxon>
        <taxon>Hexapoda</taxon>
        <taxon>Insecta</taxon>
        <taxon>Pterygota</taxon>
        <taxon>Neoptera</taxon>
        <taxon>Endopterygota</taxon>
        <taxon>Diptera</taxon>
        <taxon>Brachycera</taxon>
        <taxon>Muscomorpha</taxon>
        <taxon>Ephydroidea</taxon>
        <taxon>Drosophilidae</taxon>
        <taxon>Drosophila</taxon>
        <taxon>Sophophora</taxon>
    </lineage>
</organism>
<gene>
    <name type="primary">CDase</name>
    <name type="ORF">GA13191</name>
</gene>
<reference key="1">
    <citation type="journal article" date="2005" name="Genome Res.">
        <title>Comparative genome sequencing of Drosophila pseudoobscura: chromosomal, gene, and cis-element evolution.</title>
        <authorList>
            <person name="Richards S."/>
            <person name="Liu Y."/>
            <person name="Bettencourt B.R."/>
            <person name="Hradecky P."/>
            <person name="Letovsky S."/>
            <person name="Nielsen R."/>
            <person name="Thornton K."/>
            <person name="Hubisz M.J."/>
            <person name="Chen R."/>
            <person name="Meisel R.P."/>
            <person name="Couronne O."/>
            <person name="Hua S."/>
            <person name="Smith M.A."/>
            <person name="Zhang P."/>
            <person name="Liu J."/>
            <person name="Bussemaker H.J."/>
            <person name="van Batenburg M.F."/>
            <person name="Howells S.L."/>
            <person name="Scherer S.E."/>
            <person name="Sodergren E."/>
            <person name="Matthews B.B."/>
            <person name="Crosby M.A."/>
            <person name="Schroeder A.J."/>
            <person name="Ortiz-Barrientos D."/>
            <person name="Rives C.M."/>
            <person name="Metzker M.L."/>
            <person name="Muzny D.M."/>
            <person name="Scott G."/>
            <person name="Steffen D."/>
            <person name="Wheeler D.A."/>
            <person name="Worley K.C."/>
            <person name="Havlak P."/>
            <person name="Durbin K.J."/>
            <person name="Egan A."/>
            <person name="Gill R."/>
            <person name="Hume J."/>
            <person name="Morgan M.B."/>
            <person name="Miner G."/>
            <person name="Hamilton C."/>
            <person name="Huang Y."/>
            <person name="Waldron L."/>
            <person name="Verduzco D."/>
            <person name="Clerc-Blankenburg K.P."/>
            <person name="Dubchak I."/>
            <person name="Noor M.A.F."/>
            <person name="Anderson W."/>
            <person name="White K.P."/>
            <person name="Clark A.G."/>
            <person name="Schaeffer S.W."/>
            <person name="Gelbart W.M."/>
            <person name="Weinstock G.M."/>
            <person name="Gibbs R.A."/>
        </authorList>
    </citation>
    <scope>NUCLEOTIDE SEQUENCE [LARGE SCALE GENOMIC DNA]</scope>
    <source>
        <strain>MV2-25 / Tucson 14011-0121.94</strain>
    </source>
</reference>
<keyword id="KW-0325">Glycoprotein</keyword>
<keyword id="KW-0378">Hydrolase</keyword>
<keyword id="KW-0443">Lipid metabolism</keyword>
<keyword id="KW-1185">Reference proteome</keyword>
<keyword id="KW-0964">Secreted</keyword>
<keyword id="KW-0732">Signal</keyword>
<keyword id="KW-0746">Sphingolipid metabolism</keyword>
<proteinExistence type="inferred from homology"/>